<proteinExistence type="inferred from homology"/>
<evidence type="ECO:0000255" key="1">
    <source>
        <dbReference type="HAMAP-Rule" id="MF_00003"/>
    </source>
</evidence>
<feature type="chain" id="PRO_1000201629" description="Ribosome-binding factor A">
    <location>
        <begin position="1"/>
        <end position="132"/>
    </location>
</feature>
<comment type="function">
    <text evidence="1">One of several proteins that assist in the late maturation steps of the functional core of the 30S ribosomal subunit. Associates with free 30S ribosomal subunits (but not with 30S subunits that are part of 70S ribosomes or polysomes). Required for efficient processing of 16S rRNA. May interact with the 5'-terminal helix region of 16S rRNA.</text>
</comment>
<comment type="subunit">
    <text evidence="1">Monomer. Binds 30S ribosomal subunits, but not 50S ribosomal subunits or 70S ribosomes.</text>
</comment>
<comment type="subcellular location">
    <subcellularLocation>
        <location evidence="1">Cytoplasm</location>
    </subcellularLocation>
</comment>
<comment type="similarity">
    <text evidence="1">Belongs to the RbfA family.</text>
</comment>
<accession>C5BFB8</accession>
<sequence>MAREFSRTQRVAQEMQKEIAIILQREVKDPRVGMATVSGVEVSRDLAYAKVFVTFLNDGEPETVKSGLKALQDASGFIRMLLGKAMRLRVVPELTFAYDASLVEGMRMSNLVSNVVKDDAARRSAADRDEEA</sequence>
<gene>
    <name evidence="1" type="primary">rbfA</name>
    <name type="ordered locus">NT01EI_0468</name>
</gene>
<dbReference type="EMBL" id="CP001600">
    <property type="protein sequence ID" value="ACR67704.1"/>
    <property type="molecule type" value="Genomic_DNA"/>
</dbReference>
<dbReference type="RefSeq" id="WP_015869906.1">
    <property type="nucleotide sequence ID" value="NZ_CP169062.1"/>
</dbReference>
<dbReference type="SMR" id="C5BFB8"/>
<dbReference type="STRING" id="67780.B6E78_13100"/>
<dbReference type="GeneID" id="69537555"/>
<dbReference type="KEGG" id="eic:NT01EI_0468"/>
<dbReference type="PATRIC" id="fig|634503.3.peg.425"/>
<dbReference type="HOGENOM" id="CLU_089475_5_0_6"/>
<dbReference type="OrthoDB" id="307788at2"/>
<dbReference type="Proteomes" id="UP000001485">
    <property type="component" value="Chromosome"/>
</dbReference>
<dbReference type="GO" id="GO:0005829">
    <property type="term" value="C:cytosol"/>
    <property type="evidence" value="ECO:0007669"/>
    <property type="project" value="TreeGrafter"/>
</dbReference>
<dbReference type="GO" id="GO:0043024">
    <property type="term" value="F:ribosomal small subunit binding"/>
    <property type="evidence" value="ECO:0007669"/>
    <property type="project" value="TreeGrafter"/>
</dbReference>
<dbReference type="GO" id="GO:0030490">
    <property type="term" value="P:maturation of SSU-rRNA"/>
    <property type="evidence" value="ECO:0007669"/>
    <property type="project" value="UniProtKB-UniRule"/>
</dbReference>
<dbReference type="FunFam" id="3.30.300.20:FF:000007">
    <property type="entry name" value="Ribosome-binding factor A"/>
    <property type="match status" value="1"/>
</dbReference>
<dbReference type="Gene3D" id="3.30.300.20">
    <property type="match status" value="1"/>
</dbReference>
<dbReference type="HAMAP" id="MF_00003">
    <property type="entry name" value="RbfA"/>
    <property type="match status" value="1"/>
</dbReference>
<dbReference type="InterPro" id="IPR015946">
    <property type="entry name" value="KH_dom-like_a/b"/>
</dbReference>
<dbReference type="InterPro" id="IPR000238">
    <property type="entry name" value="RbfA"/>
</dbReference>
<dbReference type="InterPro" id="IPR023799">
    <property type="entry name" value="RbfA_dom_sf"/>
</dbReference>
<dbReference type="InterPro" id="IPR020053">
    <property type="entry name" value="Ribosome-bd_factorA_CS"/>
</dbReference>
<dbReference type="NCBIfam" id="TIGR00082">
    <property type="entry name" value="rbfA"/>
    <property type="match status" value="1"/>
</dbReference>
<dbReference type="PANTHER" id="PTHR33515">
    <property type="entry name" value="RIBOSOME-BINDING FACTOR A, CHLOROPLASTIC-RELATED"/>
    <property type="match status" value="1"/>
</dbReference>
<dbReference type="PANTHER" id="PTHR33515:SF1">
    <property type="entry name" value="RIBOSOME-BINDING FACTOR A, CHLOROPLASTIC-RELATED"/>
    <property type="match status" value="1"/>
</dbReference>
<dbReference type="Pfam" id="PF02033">
    <property type="entry name" value="RBFA"/>
    <property type="match status" value="1"/>
</dbReference>
<dbReference type="SUPFAM" id="SSF89919">
    <property type="entry name" value="Ribosome-binding factor A, RbfA"/>
    <property type="match status" value="1"/>
</dbReference>
<dbReference type="PROSITE" id="PS01319">
    <property type="entry name" value="RBFA"/>
    <property type="match status" value="1"/>
</dbReference>
<protein>
    <recommendedName>
        <fullName evidence="1">Ribosome-binding factor A</fullName>
    </recommendedName>
</protein>
<name>RBFA_EDWI9</name>
<organism>
    <name type="scientific">Edwardsiella ictaluri (strain 93-146)</name>
    <dbReference type="NCBI Taxonomy" id="634503"/>
    <lineage>
        <taxon>Bacteria</taxon>
        <taxon>Pseudomonadati</taxon>
        <taxon>Pseudomonadota</taxon>
        <taxon>Gammaproteobacteria</taxon>
        <taxon>Enterobacterales</taxon>
        <taxon>Hafniaceae</taxon>
        <taxon>Edwardsiella</taxon>
    </lineage>
</organism>
<reference key="1">
    <citation type="submission" date="2009-03" db="EMBL/GenBank/DDBJ databases">
        <title>Complete genome sequence of Edwardsiella ictaluri 93-146.</title>
        <authorList>
            <person name="Williams M.L."/>
            <person name="Gillaspy A.F."/>
            <person name="Dyer D.W."/>
            <person name="Thune R.L."/>
            <person name="Waldbieser G.C."/>
            <person name="Schuster S.C."/>
            <person name="Gipson J."/>
            <person name="Zaitshik J."/>
            <person name="Landry C."/>
            <person name="Lawrence M.L."/>
        </authorList>
    </citation>
    <scope>NUCLEOTIDE SEQUENCE [LARGE SCALE GENOMIC DNA]</scope>
    <source>
        <strain>93-146</strain>
    </source>
</reference>
<keyword id="KW-0963">Cytoplasm</keyword>
<keyword id="KW-0690">Ribosome biogenesis</keyword>